<dbReference type="EC" id="4.4.1.4"/>
<dbReference type="EMBL" id="Z12620">
    <property type="protein sequence ID" value="CAA78266.1"/>
    <property type="molecule type" value="mRNA"/>
</dbReference>
<dbReference type="PIR" id="S29300">
    <property type="entry name" value="S29300"/>
</dbReference>
<dbReference type="SMR" id="P31756"/>
<dbReference type="Allergome" id="1254">
    <property type="allergen name" value="All a Alliin lyase"/>
</dbReference>
<dbReference type="BioCyc" id="MetaCyc:MONOMER-13494"/>
<dbReference type="GO" id="GO:0005773">
    <property type="term" value="C:vacuole"/>
    <property type="evidence" value="ECO:0007669"/>
    <property type="project" value="UniProtKB-SubCell"/>
</dbReference>
<dbReference type="GO" id="GO:0047654">
    <property type="term" value="F:alliin lyase activity"/>
    <property type="evidence" value="ECO:0000250"/>
    <property type="project" value="UniProtKB"/>
</dbReference>
<dbReference type="GO" id="GO:0031404">
    <property type="term" value="F:chloride ion binding"/>
    <property type="evidence" value="ECO:0000250"/>
    <property type="project" value="UniProtKB"/>
</dbReference>
<dbReference type="GO" id="GO:0030170">
    <property type="term" value="F:pyridoxal phosphate binding"/>
    <property type="evidence" value="ECO:0000250"/>
    <property type="project" value="UniProtKB"/>
</dbReference>
<dbReference type="GO" id="GO:0008483">
    <property type="term" value="F:transaminase activity"/>
    <property type="evidence" value="ECO:0007669"/>
    <property type="project" value="TreeGrafter"/>
</dbReference>
<dbReference type="GO" id="GO:0006520">
    <property type="term" value="P:amino acid metabolic process"/>
    <property type="evidence" value="ECO:0007669"/>
    <property type="project" value="TreeGrafter"/>
</dbReference>
<dbReference type="CDD" id="cd00609">
    <property type="entry name" value="AAT_like"/>
    <property type="match status" value="1"/>
</dbReference>
<dbReference type="Gene3D" id="3.90.1150.10">
    <property type="entry name" value="Aspartate Aminotransferase, domain 1"/>
    <property type="match status" value="1"/>
</dbReference>
<dbReference type="Gene3D" id="2.10.25.30">
    <property type="entry name" value="EGF-like, alliinase"/>
    <property type="match status" value="1"/>
</dbReference>
<dbReference type="Gene3D" id="3.40.640.10">
    <property type="entry name" value="Type I PLP-dependent aspartate aminotransferase-like (Major domain)"/>
    <property type="match status" value="1"/>
</dbReference>
<dbReference type="InterPro" id="IPR006948">
    <property type="entry name" value="Alliinase_C"/>
</dbReference>
<dbReference type="InterPro" id="IPR037029">
    <property type="entry name" value="Alliinase_N_sf"/>
</dbReference>
<dbReference type="InterPro" id="IPR006947">
    <property type="entry name" value="EGF_alliinase"/>
</dbReference>
<dbReference type="InterPro" id="IPR050478">
    <property type="entry name" value="Ethylene_sulfur-biosynth"/>
</dbReference>
<dbReference type="InterPro" id="IPR015424">
    <property type="entry name" value="PyrdxlP-dep_Trfase"/>
</dbReference>
<dbReference type="InterPro" id="IPR015421">
    <property type="entry name" value="PyrdxlP-dep_Trfase_major"/>
</dbReference>
<dbReference type="InterPro" id="IPR015422">
    <property type="entry name" value="PyrdxlP-dep_Trfase_small"/>
</dbReference>
<dbReference type="PANTHER" id="PTHR43795">
    <property type="entry name" value="BIFUNCTIONAL ASPARTATE AMINOTRANSFERASE AND GLUTAMATE/ASPARTATE-PREPHENATE AMINOTRANSFERASE-RELATED"/>
    <property type="match status" value="1"/>
</dbReference>
<dbReference type="PANTHER" id="PTHR43795:SF20">
    <property type="entry name" value="TRYPTOPHAN AMINOTRANSFERASE-RELATED PROTEIN 3"/>
    <property type="match status" value="1"/>
</dbReference>
<dbReference type="Pfam" id="PF04864">
    <property type="entry name" value="Alliinase_C"/>
    <property type="match status" value="1"/>
</dbReference>
<dbReference type="Pfam" id="PF04863">
    <property type="entry name" value="EGF_alliinase"/>
    <property type="match status" value="1"/>
</dbReference>
<dbReference type="SUPFAM" id="SSF53383">
    <property type="entry name" value="PLP-dependent transferases"/>
    <property type="match status" value="1"/>
</dbReference>
<dbReference type="PROSITE" id="PS00022">
    <property type="entry name" value="EGF_1"/>
    <property type="match status" value="1"/>
</dbReference>
<reference key="1">
    <citation type="journal article" date="1992" name="Eur. J. Biochem.">
        <title>Isolation and characterization of alliinase cDNA clones from garlic (Allium sativum L.) and related species.</title>
        <authorList>
            <person name="van Damme E.J.M."/>
            <person name="Smeets K."/>
            <person name="Torrekens S."/>
            <person name="van Leuven F."/>
            <person name="Peumans W.J."/>
        </authorList>
    </citation>
    <scope>NUCLEOTIDE SEQUENCE [MRNA]</scope>
    <source>
        <tissue>Shoot</tissue>
    </source>
</reference>
<name>ALLN_ALLCG</name>
<protein>
    <recommendedName>
        <fullName>Alliin lyase</fullName>
        <shortName>Alliinase</shortName>
        <ecNumber>4.4.1.4</ecNumber>
    </recommendedName>
    <alternativeName>
        <fullName>Cysteine sulphoxide lyase</fullName>
    </alternativeName>
</protein>
<feature type="propeptide" id="PRO_0000020681">
    <location>
        <begin position="1" status="less than"/>
        <end position="2"/>
    </location>
</feature>
<feature type="chain" id="PRO_0000020682" description="Alliin lyase">
    <location>
        <begin position="3"/>
        <end position="447"/>
    </location>
</feature>
<feature type="domain" description="EGF-like; atypical">
    <location>
        <begin position="15"/>
        <end position="61"/>
    </location>
</feature>
<feature type="binding site" evidence="2">
    <location>
        <begin position="94"/>
        <end position="102"/>
    </location>
    <ligand>
        <name>chloride</name>
        <dbReference type="ChEBI" id="CHEBI:17996"/>
    </ligand>
</feature>
<feature type="modified residue" description="N6-(pyridoxal phosphate)lysine" evidence="2">
    <location>
        <position position="253"/>
    </location>
</feature>
<feature type="glycosylation site" description="N-linked (GlcNAc...) asparagine" evidence="3">
    <location>
        <position position="21"/>
    </location>
</feature>
<feature type="glycosylation site" description="N-linked (GlcNAc...) asparagine" evidence="2 4">
    <location>
        <position position="148"/>
    </location>
</feature>
<feature type="glycosylation site" description="N-linked (GlcNAc...) asparagine" evidence="2 4">
    <location>
        <position position="193"/>
    </location>
</feature>
<feature type="glycosylation site" description="N-linked (GlcNAc...) asparagine" evidence="2 4">
    <location>
        <position position="330"/>
    </location>
</feature>
<feature type="disulfide bond" evidence="2">
    <location>
        <begin position="22"/>
        <end position="41"/>
    </location>
</feature>
<feature type="disulfide bond" evidence="2">
    <location>
        <begin position="43"/>
        <end position="52"/>
    </location>
</feature>
<feature type="disulfide bond" evidence="2">
    <location>
        <begin position="46"/>
        <end position="59"/>
    </location>
</feature>
<feature type="disulfide bond" evidence="2">
    <location>
        <begin position="370"/>
        <end position="378"/>
    </location>
</feature>
<feature type="non-terminal residue">
    <location>
        <position position="1"/>
    </location>
</feature>
<accession>P31756</accession>
<comment type="catalytic activity">
    <reaction>
        <text>an S-alkyl-L-cysteine S-oxide = an S-alkyl sulfenate + 2-aminoprop-2-enoate</text>
        <dbReference type="Rhea" id="RHEA:20141"/>
        <dbReference type="ChEBI" id="CHEBI:22326"/>
        <dbReference type="ChEBI" id="CHEBI:76565"/>
        <dbReference type="ChEBI" id="CHEBI:142409"/>
        <dbReference type="EC" id="4.4.1.4"/>
    </reaction>
</comment>
<comment type="cofactor">
    <cofactor>
        <name>pyridoxal 5'-phosphate</name>
        <dbReference type="ChEBI" id="CHEBI:597326"/>
    </cofactor>
</comment>
<comment type="subunit">
    <text evidence="1">Homodimer.</text>
</comment>
<comment type="subcellular location">
    <subcellularLocation>
        <location>Vacuole</location>
    </subcellularLocation>
</comment>
<comment type="domain">
    <text evidence="1">The 6 Cys residues of the EGF-like domain are arranged in a disulfide pattern different from the one found in the canonical EGFs. The function of this domain is unclear. It may be a binding site for other proteins or the docking site for a putative alliinase receptor (By similarity).</text>
</comment>
<comment type="similarity">
    <text evidence="5">Belongs to the alliinase family.</text>
</comment>
<evidence type="ECO:0000250" key="1"/>
<evidence type="ECO:0000250" key="2">
    <source>
        <dbReference type="UniProtKB" id="Q01594"/>
    </source>
</evidence>
<evidence type="ECO:0000255" key="3"/>
<evidence type="ECO:0000255" key="4">
    <source>
        <dbReference type="PROSITE-ProRule" id="PRU00498"/>
    </source>
</evidence>
<evidence type="ECO:0000305" key="5"/>
<sequence length="447" mass="51261">QAKVTWSLKAAEEAEAVANINCSGHGRAFLDGILSDGSPKCECNTCYTGADCSQKITGCSADVASGDGLFLEEYWQQHKENSAVLVSGWHRTSYFFNPVSNFISFELEKTIKELHEIVGNAAAKDRYIVFGVGVTQLIHGLVISLSPNMTATPCAPQSKVVAHAPYYPVFREQTKYFDKKGYEWKGNAADYVNTSTPEQFIEMVTSPNNPEGLLRHEVIKGCKSIYDMVYYWPHYTPIKYKADEDIMLFTMSKYTGHSGSRFGWALIKDETVYNKLLNYMTKNTEGTSRETQLRSLKILKEVTAMIKTQKGTMRDLNTFGFQKLRERWVNITALLDKSDRFSYQKLPQSEYCNYFRRMRPPSPSYAWVKCEWEEDKDCYQTFQNGRINTQSGEGFEAGSRYVRLSLIKTKDDFDQLMYYLKIMVEAKRKTPLIKQLSNDQISRRPFI</sequence>
<proteinExistence type="evidence at transcript level"/>
<organism>
    <name type="scientific">Allium cepa var. aggregatum</name>
    <name type="common">Shallot</name>
    <name type="synonym">Allium ascalonicum</name>
    <dbReference type="NCBI Taxonomy" id="28911"/>
    <lineage>
        <taxon>Eukaryota</taxon>
        <taxon>Viridiplantae</taxon>
        <taxon>Streptophyta</taxon>
        <taxon>Embryophyta</taxon>
        <taxon>Tracheophyta</taxon>
        <taxon>Spermatophyta</taxon>
        <taxon>Magnoliopsida</taxon>
        <taxon>Liliopsida</taxon>
        <taxon>Asparagales</taxon>
        <taxon>Amaryllidaceae</taxon>
        <taxon>Allioideae</taxon>
        <taxon>Allieae</taxon>
        <taxon>Allium</taxon>
    </lineage>
</organism>
<keyword id="KW-0868">Chloride</keyword>
<keyword id="KW-1015">Disulfide bond</keyword>
<keyword id="KW-0245">EGF-like domain</keyword>
<keyword id="KW-0325">Glycoprotein</keyword>
<keyword id="KW-0456">Lyase</keyword>
<keyword id="KW-0663">Pyridoxal phosphate</keyword>
<keyword id="KW-0926">Vacuole</keyword>